<evidence type="ECO:0000255" key="1">
    <source>
        <dbReference type="HAMAP-Rule" id="MF_00551"/>
    </source>
</evidence>
<feature type="chain" id="PRO_1000129097" description="Uridine kinase">
    <location>
        <begin position="1"/>
        <end position="213"/>
    </location>
</feature>
<feature type="binding site" evidence="1">
    <location>
        <begin position="15"/>
        <end position="22"/>
    </location>
    <ligand>
        <name>ATP</name>
        <dbReference type="ChEBI" id="CHEBI:30616"/>
    </ligand>
</feature>
<dbReference type="EC" id="2.7.1.48" evidence="1"/>
<dbReference type="EMBL" id="CP001048">
    <property type="protein sequence ID" value="ACC88615.1"/>
    <property type="molecule type" value="Genomic_DNA"/>
</dbReference>
<dbReference type="RefSeq" id="WP_002211872.1">
    <property type="nucleotide sequence ID" value="NZ_CP009780.1"/>
</dbReference>
<dbReference type="SMR" id="B2JZK5"/>
<dbReference type="GeneID" id="57977044"/>
<dbReference type="KEGG" id="ypb:YPTS_1646"/>
<dbReference type="PATRIC" id="fig|502801.10.peg.1017"/>
<dbReference type="UniPathway" id="UPA00574">
    <property type="reaction ID" value="UER00637"/>
</dbReference>
<dbReference type="UniPathway" id="UPA00579">
    <property type="reaction ID" value="UER00640"/>
</dbReference>
<dbReference type="GO" id="GO:0005737">
    <property type="term" value="C:cytoplasm"/>
    <property type="evidence" value="ECO:0007669"/>
    <property type="project" value="UniProtKB-SubCell"/>
</dbReference>
<dbReference type="GO" id="GO:0005524">
    <property type="term" value="F:ATP binding"/>
    <property type="evidence" value="ECO:0007669"/>
    <property type="project" value="UniProtKB-UniRule"/>
</dbReference>
<dbReference type="GO" id="GO:0043771">
    <property type="term" value="F:cytidine kinase activity"/>
    <property type="evidence" value="ECO:0007669"/>
    <property type="project" value="RHEA"/>
</dbReference>
<dbReference type="GO" id="GO:0004849">
    <property type="term" value="F:uridine kinase activity"/>
    <property type="evidence" value="ECO:0007669"/>
    <property type="project" value="UniProtKB-UniRule"/>
</dbReference>
<dbReference type="GO" id="GO:0044211">
    <property type="term" value="P:CTP salvage"/>
    <property type="evidence" value="ECO:0007669"/>
    <property type="project" value="UniProtKB-UniRule"/>
</dbReference>
<dbReference type="GO" id="GO:0044206">
    <property type="term" value="P:UMP salvage"/>
    <property type="evidence" value="ECO:0007669"/>
    <property type="project" value="UniProtKB-UniRule"/>
</dbReference>
<dbReference type="CDD" id="cd02023">
    <property type="entry name" value="UMPK"/>
    <property type="match status" value="1"/>
</dbReference>
<dbReference type="FunFam" id="3.40.50.300:FF:000252">
    <property type="entry name" value="Uridine kinase"/>
    <property type="match status" value="1"/>
</dbReference>
<dbReference type="Gene3D" id="3.40.50.300">
    <property type="entry name" value="P-loop containing nucleotide triphosphate hydrolases"/>
    <property type="match status" value="1"/>
</dbReference>
<dbReference type="HAMAP" id="MF_00551">
    <property type="entry name" value="Uridine_kinase"/>
    <property type="match status" value="1"/>
</dbReference>
<dbReference type="InterPro" id="IPR027417">
    <property type="entry name" value="P-loop_NTPase"/>
</dbReference>
<dbReference type="InterPro" id="IPR006083">
    <property type="entry name" value="PRK/URK"/>
</dbReference>
<dbReference type="InterPro" id="IPR026008">
    <property type="entry name" value="Uridine_kinase"/>
</dbReference>
<dbReference type="InterPro" id="IPR000764">
    <property type="entry name" value="Uridine_kinase-like"/>
</dbReference>
<dbReference type="NCBIfam" id="NF004018">
    <property type="entry name" value="PRK05480.1"/>
    <property type="match status" value="1"/>
</dbReference>
<dbReference type="NCBIfam" id="TIGR00235">
    <property type="entry name" value="udk"/>
    <property type="match status" value="1"/>
</dbReference>
<dbReference type="PANTHER" id="PTHR10285">
    <property type="entry name" value="URIDINE KINASE"/>
    <property type="match status" value="1"/>
</dbReference>
<dbReference type="Pfam" id="PF00485">
    <property type="entry name" value="PRK"/>
    <property type="match status" value="1"/>
</dbReference>
<dbReference type="PRINTS" id="PR00988">
    <property type="entry name" value="URIDINKINASE"/>
</dbReference>
<dbReference type="SUPFAM" id="SSF52540">
    <property type="entry name" value="P-loop containing nucleoside triphosphate hydrolases"/>
    <property type="match status" value="1"/>
</dbReference>
<sequence>MTDKAHQCVIIGIAGASASGKSLIASTLYRELREQVGDQHIGVIPEDGYYKDQSHLSMEERVKTNYDHPSAMDHNLLLEHLQALKAGKPVELPLYSYTEHTRKKETVHLEPKKVIILEGILLLTDIRLRQEMNFSIFVDTPLDICLMRRMKRDVNERGRSMDSVMAQYQKTVRPMFLQFIEPSKQYADIIVPRGGKNRIAIDILKAKISQFFE</sequence>
<accession>B2JZK5</accession>
<organism>
    <name type="scientific">Yersinia pseudotuberculosis serotype IB (strain PB1/+)</name>
    <dbReference type="NCBI Taxonomy" id="502801"/>
    <lineage>
        <taxon>Bacteria</taxon>
        <taxon>Pseudomonadati</taxon>
        <taxon>Pseudomonadota</taxon>
        <taxon>Gammaproteobacteria</taxon>
        <taxon>Enterobacterales</taxon>
        <taxon>Yersiniaceae</taxon>
        <taxon>Yersinia</taxon>
    </lineage>
</organism>
<gene>
    <name evidence="1" type="primary">udk</name>
    <name type="ordered locus">YPTS_1646</name>
</gene>
<comment type="catalytic activity">
    <reaction evidence="1">
        <text>uridine + ATP = UMP + ADP + H(+)</text>
        <dbReference type="Rhea" id="RHEA:16825"/>
        <dbReference type="ChEBI" id="CHEBI:15378"/>
        <dbReference type="ChEBI" id="CHEBI:16704"/>
        <dbReference type="ChEBI" id="CHEBI:30616"/>
        <dbReference type="ChEBI" id="CHEBI:57865"/>
        <dbReference type="ChEBI" id="CHEBI:456216"/>
        <dbReference type="EC" id="2.7.1.48"/>
    </reaction>
</comment>
<comment type="catalytic activity">
    <reaction evidence="1">
        <text>cytidine + ATP = CMP + ADP + H(+)</text>
        <dbReference type="Rhea" id="RHEA:24674"/>
        <dbReference type="ChEBI" id="CHEBI:15378"/>
        <dbReference type="ChEBI" id="CHEBI:17562"/>
        <dbReference type="ChEBI" id="CHEBI:30616"/>
        <dbReference type="ChEBI" id="CHEBI:60377"/>
        <dbReference type="ChEBI" id="CHEBI:456216"/>
        <dbReference type="EC" id="2.7.1.48"/>
    </reaction>
</comment>
<comment type="pathway">
    <text evidence="1">Pyrimidine metabolism; CTP biosynthesis via salvage pathway; CTP from cytidine: step 1/3.</text>
</comment>
<comment type="pathway">
    <text evidence="1">Pyrimidine metabolism; UMP biosynthesis via salvage pathway; UMP from uridine: step 1/1.</text>
</comment>
<comment type="subcellular location">
    <subcellularLocation>
        <location evidence="1">Cytoplasm</location>
    </subcellularLocation>
</comment>
<comment type="similarity">
    <text evidence="1">Belongs to the uridine kinase family.</text>
</comment>
<keyword id="KW-0067">ATP-binding</keyword>
<keyword id="KW-0963">Cytoplasm</keyword>
<keyword id="KW-0418">Kinase</keyword>
<keyword id="KW-0547">Nucleotide-binding</keyword>
<keyword id="KW-0808">Transferase</keyword>
<name>URK_YERPB</name>
<protein>
    <recommendedName>
        <fullName evidence="1">Uridine kinase</fullName>
        <ecNumber evidence="1">2.7.1.48</ecNumber>
    </recommendedName>
    <alternativeName>
        <fullName evidence="1">Cytidine monophosphokinase</fullName>
    </alternativeName>
    <alternativeName>
        <fullName evidence="1">Uridine monophosphokinase</fullName>
    </alternativeName>
</protein>
<proteinExistence type="inferred from homology"/>
<reference key="1">
    <citation type="submission" date="2008-04" db="EMBL/GenBank/DDBJ databases">
        <title>Complete sequence of Yersinia pseudotuberculosis PB1/+.</title>
        <authorList>
            <person name="Copeland A."/>
            <person name="Lucas S."/>
            <person name="Lapidus A."/>
            <person name="Glavina del Rio T."/>
            <person name="Dalin E."/>
            <person name="Tice H."/>
            <person name="Bruce D."/>
            <person name="Goodwin L."/>
            <person name="Pitluck S."/>
            <person name="Munk A.C."/>
            <person name="Brettin T."/>
            <person name="Detter J.C."/>
            <person name="Han C."/>
            <person name="Tapia R."/>
            <person name="Schmutz J."/>
            <person name="Larimer F."/>
            <person name="Land M."/>
            <person name="Hauser L."/>
            <person name="Challacombe J.F."/>
            <person name="Green L."/>
            <person name="Lindler L.E."/>
            <person name="Nikolich M.P."/>
            <person name="Richardson P."/>
        </authorList>
    </citation>
    <scope>NUCLEOTIDE SEQUENCE [LARGE SCALE GENOMIC DNA]</scope>
    <source>
        <strain>PB1/+</strain>
    </source>
</reference>